<comment type="function">
    <text evidence="1">Metalloprotease which hydrolyzes the alpha and gamma chains of fibrinogen. No activity against fibrinogen beta chains. Active against the synthetic tissue plasminogen activator substrate H-D-Ile-Pro-Arg-PNA and the synthetic plasmin substrate H-D-Val-Leu-Lys-pNA.</text>
</comment>
<comment type="cofactor">
    <cofactor evidence="1">
        <name>Ca(2+)</name>
        <dbReference type="ChEBI" id="CHEBI:29108"/>
    </cofactor>
    <cofactor evidence="1">
        <name>Mg(2+)</name>
        <dbReference type="ChEBI" id="CHEBI:18420"/>
    </cofactor>
    <cofactor evidence="1">
        <name>Mn(2+)</name>
        <dbReference type="ChEBI" id="CHEBI:29035"/>
    </cofactor>
</comment>
<comment type="biophysicochemical properties">
    <phDependence>
        <text evidence="1">Optimum pH is 7.0. Active at pH 4.0 to pH 9.0. Stable from pH 5.5 to pH 7.0.</text>
    </phDependence>
    <temperatureDependence>
        <text evidence="1">Optimum temperature for activity is 30 degrees Celsius. Stable below 40 degrees Celsius. Above 45 degrees Celsius the activity is sharply reduced.</text>
    </temperatureDependence>
</comment>
<comment type="miscellaneous">
    <text evidence="1">On the 2D-gel the determined MW is: 51 kDa.</text>
</comment>
<evidence type="ECO:0000269" key="1">
    <source>
    </source>
</evidence>
<evidence type="ECO:0000303" key="2">
    <source>
    </source>
</evidence>
<evidence type="ECO:0000305" key="3"/>
<protein>
    <recommendedName>
        <fullName evidence="2">Herinase</fullName>
        <ecNumber evidence="1">3.4.-.-</ecNumber>
    </recommendedName>
</protein>
<dbReference type="EC" id="3.4.-.-" evidence="1"/>
<dbReference type="GO" id="GO:0046872">
    <property type="term" value="F:metal ion binding"/>
    <property type="evidence" value="ECO:0007669"/>
    <property type="project" value="UniProtKB-KW"/>
</dbReference>
<dbReference type="GO" id="GO:0008237">
    <property type="term" value="F:metallopeptidase activity"/>
    <property type="evidence" value="ECO:0007669"/>
    <property type="project" value="UniProtKB-KW"/>
</dbReference>
<dbReference type="GO" id="GO:0006508">
    <property type="term" value="P:proteolysis"/>
    <property type="evidence" value="ECO:0007669"/>
    <property type="project" value="UniProtKB-KW"/>
</dbReference>
<proteinExistence type="evidence at protein level"/>
<feature type="chain" id="PRO_0000424350" description="Herinase">
    <location>
        <begin position="1"/>
        <end position="16" status="greater than"/>
    </location>
</feature>
<feature type="non-terminal residue" evidence="2">
    <location>
        <position position="16"/>
    </location>
</feature>
<accession>C0HJF2</accession>
<reference evidence="3" key="1">
    <citation type="journal article" date="2013" name="Appl. Biochem. Biotechnol.">
        <title>Herinase: a novel bi-functional fibrinolytic protease from the monkey head mushroom, Hericium erinaceum.</title>
        <authorList>
            <person name="Choi B.S."/>
            <person name="Sapkota K."/>
            <person name="Choi J.H."/>
            <person name="Shin C.H."/>
            <person name="Kim S."/>
            <person name="Kim S.J."/>
        </authorList>
    </citation>
    <scope>PROTEIN SEQUENCE</scope>
    <scope>FUNCTION</scope>
    <scope>COFACTOR</scope>
    <scope>BIOPHYSICOCHEMICAL PROPERTIES</scope>
    <source>
        <tissue evidence="1">Fruiting body</tissue>
    </source>
</reference>
<name>HERIN_HERER</name>
<organism>
    <name type="scientific">Hericium erinaceus</name>
    <name type="common">Lion's mane mushroom</name>
    <name type="synonym">Hydnum erinaceus</name>
    <dbReference type="NCBI Taxonomy" id="91752"/>
    <lineage>
        <taxon>Eukaryota</taxon>
        <taxon>Fungi</taxon>
        <taxon>Dikarya</taxon>
        <taxon>Basidiomycota</taxon>
        <taxon>Agaricomycotina</taxon>
        <taxon>Agaricomycetes</taxon>
        <taxon>Russulales</taxon>
        <taxon>Hericiaceae</taxon>
        <taxon>Hericium</taxon>
    </lineage>
</organism>
<keyword id="KW-0903">Direct protein sequencing</keyword>
<keyword id="KW-0378">Hydrolase</keyword>
<keyword id="KW-0479">Metal-binding</keyword>
<keyword id="KW-0482">Metalloprotease</keyword>
<keyword id="KW-0645">Protease</keyword>
<sequence>VPSSFRTTITDAQLRG</sequence>